<dbReference type="EMBL" id="BC110236">
    <property type="protein sequence ID" value="AAI10237.1"/>
    <property type="molecule type" value="mRNA"/>
</dbReference>
<dbReference type="RefSeq" id="NP_001069857.1">
    <property type="nucleotide sequence ID" value="NM_001076389.2"/>
</dbReference>
<dbReference type="SMR" id="Q2YDG2"/>
<dbReference type="FunCoup" id="Q2YDG2">
    <property type="interactions" value="62"/>
</dbReference>
<dbReference type="STRING" id="9913.ENSBTAP00000046997"/>
<dbReference type="PaxDb" id="9913-ENSBTAP00000046997"/>
<dbReference type="GeneID" id="615662"/>
<dbReference type="KEGG" id="bta:615662"/>
<dbReference type="CTD" id="255119"/>
<dbReference type="VEuPathDB" id="HostDB:ENSBTAG00000035776"/>
<dbReference type="eggNOG" id="ENOG502QSP8">
    <property type="taxonomic scope" value="Eukaryota"/>
</dbReference>
<dbReference type="HOGENOM" id="CLU_070912_0_0_1"/>
<dbReference type="InParanoid" id="Q2YDG2"/>
<dbReference type="OMA" id="FNNYQEY"/>
<dbReference type="OrthoDB" id="2136125at2759"/>
<dbReference type="TreeFam" id="TF323286"/>
<dbReference type="Proteomes" id="UP000009136">
    <property type="component" value="Chromosome 6"/>
</dbReference>
<dbReference type="Bgee" id="ENSBTAG00000035776">
    <property type="expression patterns" value="Expressed in semen and 34 other cell types or tissues"/>
</dbReference>
<dbReference type="GO" id="GO:0005737">
    <property type="term" value="C:cytoplasm"/>
    <property type="evidence" value="ECO:0000250"/>
    <property type="project" value="UniProtKB"/>
</dbReference>
<dbReference type="GO" id="GO:0005634">
    <property type="term" value="C:nucleus"/>
    <property type="evidence" value="ECO:0007669"/>
    <property type="project" value="UniProtKB-SubCell"/>
</dbReference>
<dbReference type="InterPro" id="IPR027887">
    <property type="entry name" value="DUF4464"/>
</dbReference>
<dbReference type="PANTHER" id="PTHR33588">
    <property type="entry name" value="CILIA- AND FLAGELLA-ASSOCIATED PROTEIN 299"/>
    <property type="match status" value="1"/>
</dbReference>
<dbReference type="PANTHER" id="PTHR33588:SF1">
    <property type="entry name" value="CILIA- AND FLAGELLA-ASSOCIATED PROTEIN 299"/>
    <property type="match status" value="1"/>
</dbReference>
<dbReference type="Pfam" id="PF14713">
    <property type="entry name" value="DUF4464"/>
    <property type="match status" value="1"/>
</dbReference>
<protein>
    <recommendedName>
        <fullName evidence="3">Cilia- and flagella-associated protein 299</fullName>
    </recommendedName>
</protein>
<gene>
    <name evidence="1" type="primary">CFAP299</name>
</gene>
<accession>Q2YDG2</accession>
<comment type="function">
    <text evidence="2">May be involved in spermatogenesis.</text>
</comment>
<comment type="subcellular location">
    <subcellularLocation>
        <location evidence="2">Cytoplasm</location>
    </subcellularLocation>
    <subcellularLocation>
        <location evidence="2">Nucleus</location>
    </subcellularLocation>
    <text evidence="2">Mainly cytoplasmic.</text>
</comment>
<proteinExistence type="evidence at transcript level"/>
<feature type="chain" id="PRO_0000301954" description="Cilia- and flagella-associated protein 299">
    <location>
        <begin position="1"/>
        <end position="231"/>
    </location>
</feature>
<name>CF299_BOVIN</name>
<organism>
    <name type="scientific">Bos taurus</name>
    <name type="common">Bovine</name>
    <dbReference type="NCBI Taxonomy" id="9913"/>
    <lineage>
        <taxon>Eukaryota</taxon>
        <taxon>Metazoa</taxon>
        <taxon>Chordata</taxon>
        <taxon>Craniata</taxon>
        <taxon>Vertebrata</taxon>
        <taxon>Euteleostomi</taxon>
        <taxon>Mammalia</taxon>
        <taxon>Eutheria</taxon>
        <taxon>Laurasiatheria</taxon>
        <taxon>Artiodactyla</taxon>
        <taxon>Ruminantia</taxon>
        <taxon>Pecora</taxon>
        <taxon>Bovidae</taxon>
        <taxon>Bovinae</taxon>
        <taxon>Bos</taxon>
    </lineage>
</organism>
<evidence type="ECO:0000250" key="1">
    <source>
        <dbReference type="UniProtKB" id="Q6V702"/>
    </source>
</evidence>
<evidence type="ECO:0000250" key="2">
    <source>
        <dbReference type="UniProtKB" id="Q810M1"/>
    </source>
</evidence>
<evidence type="ECO:0000305" key="3"/>
<keyword id="KW-0963">Cytoplasm</keyword>
<keyword id="KW-0539">Nucleus</keyword>
<keyword id="KW-1185">Reference proteome</keyword>
<sequence>MDQDEALTTVDNIVTQFNTYEDFLDSQITTLDLYYLEDEGLARQLVELGYRGTGEVVKREDFEARKAAIEIARLAERTQKKTLTSAGKDLHDNFLKALAVREEDNRSGKSVIFIRDKNSHGQEVSGYIDYAHRLKTEDFEVYFSGKKRLLPRPTDMSFYNWDSHIAIWNSTPNYQVIADNPEGLLFKYKRDRKILNVDPKAQPGDNSTRSPILTELYTQVVIFDHVSRRKT</sequence>
<reference key="1">
    <citation type="submission" date="2005-11" db="EMBL/GenBank/DDBJ databases">
        <authorList>
            <consortium name="NIH - Mammalian Gene Collection (MGC) project"/>
        </authorList>
    </citation>
    <scope>NUCLEOTIDE SEQUENCE [LARGE SCALE MRNA]</scope>
    <source>
        <strain>Crossbred X Angus</strain>
        <tissue>Liver</tissue>
    </source>
</reference>